<reference key="1">
    <citation type="journal article" date="2002" name="Proc. Natl. Acad. Sci. U.S.A.">
        <title>Genome sequence of the hyperthermophilic crenarchaeon Pyrobaculum aerophilum.</title>
        <authorList>
            <person name="Fitz-Gibbon S.T."/>
            <person name="Ladner H."/>
            <person name="Kim U.-J."/>
            <person name="Stetter K.O."/>
            <person name="Simon M.I."/>
            <person name="Miller J.H."/>
        </authorList>
    </citation>
    <scope>NUCLEOTIDE SEQUENCE [LARGE SCALE GENOMIC DNA]</scope>
    <source>
        <strain>ATCC 51768 / DSM 7523 / JCM 9630 / CIP 104966 / NBRC 100827 / IM2</strain>
    </source>
</reference>
<keyword id="KW-0028">Amino-acid biosynthesis</keyword>
<keyword id="KW-0057">Aromatic amino acid biosynthesis</keyword>
<keyword id="KW-0413">Isomerase</keyword>
<keyword id="KW-1185">Reference proteome</keyword>
<keyword id="KW-0822">Tryptophan biosynthesis</keyword>
<accession>Q8ZV18</accession>
<protein>
    <recommendedName>
        <fullName>N-(5'-phosphoribosyl)anthranilate isomerase</fullName>
        <shortName>PRAI</shortName>
        <ecNumber>5.3.1.24</ecNumber>
    </recommendedName>
</protein>
<feature type="chain" id="PRO_0000154411" description="N-(5'-phosphoribosyl)anthranilate isomerase">
    <location>
        <begin position="1"/>
        <end position="208"/>
    </location>
</feature>
<name>TRPF_PYRAE</name>
<gene>
    <name type="primary">trpF</name>
    <name type="ordered locus">PAE2499</name>
</gene>
<organism>
    <name type="scientific">Pyrobaculum aerophilum (strain ATCC 51768 / DSM 7523 / JCM 9630 / CIP 104966 / NBRC 100827 / IM2)</name>
    <dbReference type="NCBI Taxonomy" id="178306"/>
    <lineage>
        <taxon>Archaea</taxon>
        <taxon>Thermoproteota</taxon>
        <taxon>Thermoprotei</taxon>
        <taxon>Thermoproteales</taxon>
        <taxon>Thermoproteaceae</taxon>
        <taxon>Pyrobaculum</taxon>
    </lineage>
</organism>
<sequence length="208" mass="22396">MVLVKICGVVRVEDAVLLDGVADYIGFIVEPTSPRSVKPEALRSLRDAVIKSRPVLVTATIPPKEAVDIAAKNEIPVVQYHSTLAPKDFDYAETRGVTLAPVAVYKPGIELKQLVEELLKTPHEYVLVDADKKSQERYEGGLKIPLTLLAEVAPLGRVALAGGITPENAQLIARLNPYMIDVASGVEASPGVKDMNKVKALLKAVGRL</sequence>
<evidence type="ECO:0000305" key="1"/>
<dbReference type="EC" id="5.3.1.24"/>
<dbReference type="EMBL" id="AE009441">
    <property type="protein sequence ID" value="AAL64238.1"/>
    <property type="molecule type" value="Genomic_DNA"/>
</dbReference>
<dbReference type="SMR" id="Q8ZV18"/>
<dbReference type="FunCoup" id="Q8ZV18">
    <property type="interactions" value="75"/>
</dbReference>
<dbReference type="STRING" id="178306.PAE2499"/>
<dbReference type="EnsemblBacteria" id="AAL64238">
    <property type="protein sequence ID" value="AAL64238"/>
    <property type="gene ID" value="PAE2499"/>
</dbReference>
<dbReference type="KEGG" id="pai:PAE2499"/>
<dbReference type="PATRIC" id="fig|178306.9.peg.1863"/>
<dbReference type="eggNOG" id="arCOG01983">
    <property type="taxonomic scope" value="Archaea"/>
</dbReference>
<dbReference type="HOGENOM" id="CLU_076364_3_0_2"/>
<dbReference type="InParanoid" id="Q8ZV18"/>
<dbReference type="UniPathway" id="UPA00035">
    <property type="reaction ID" value="UER00042"/>
</dbReference>
<dbReference type="Proteomes" id="UP000002439">
    <property type="component" value="Chromosome"/>
</dbReference>
<dbReference type="GO" id="GO:0004640">
    <property type="term" value="F:phosphoribosylanthranilate isomerase activity"/>
    <property type="evidence" value="ECO:0000318"/>
    <property type="project" value="GO_Central"/>
</dbReference>
<dbReference type="GO" id="GO:0000162">
    <property type="term" value="P:L-tryptophan biosynthetic process"/>
    <property type="evidence" value="ECO:0000318"/>
    <property type="project" value="GO_Central"/>
</dbReference>
<dbReference type="CDD" id="cd00405">
    <property type="entry name" value="PRAI"/>
    <property type="match status" value="1"/>
</dbReference>
<dbReference type="FunFam" id="3.20.20.70:FF:000600">
    <property type="match status" value="1"/>
</dbReference>
<dbReference type="Gene3D" id="3.20.20.70">
    <property type="entry name" value="Aldolase class I"/>
    <property type="match status" value="1"/>
</dbReference>
<dbReference type="HAMAP" id="MF_00135">
    <property type="entry name" value="PRAI"/>
    <property type="match status" value="1"/>
</dbReference>
<dbReference type="InterPro" id="IPR013785">
    <property type="entry name" value="Aldolase_TIM"/>
</dbReference>
<dbReference type="InterPro" id="IPR001240">
    <property type="entry name" value="PRAI_dom"/>
</dbReference>
<dbReference type="InterPro" id="IPR011060">
    <property type="entry name" value="RibuloseP-bd_barrel"/>
</dbReference>
<dbReference type="InterPro" id="IPR044643">
    <property type="entry name" value="TrpF_fam"/>
</dbReference>
<dbReference type="PANTHER" id="PTHR42894">
    <property type="entry name" value="N-(5'-PHOSPHORIBOSYL)ANTHRANILATE ISOMERASE"/>
    <property type="match status" value="1"/>
</dbReference>
<dbReference type="PANTHER" id="PTHR42894:SF1">
    <property type="entry name" value="N-(5'-PHOSPHORIBOSYL)ANTHRANILATE ISOMERASE"/>
    <property type="match status" value="1"/>
</dbReference>
<dbReference type="Pfam" id="PF00697">
    <property type="entry name" value="PRAI"/>
    <property type="match status" value="1"/>
</dbReference>
<dbReference type="SUPFAM" id="SSF51366">
    <property type="entry name" value="Ribulose-phoshate binding barrel"/>
    <property type="match status" value="1"/>
</dbReference>
<comment type="catalytic activity">
    <reaction>
        <text>N-(5-phospho-beta-D-ribosyl)anthranilate = 1-(2-carboxyphenylamino)-1-deoxy-D-ribulose 5-phosphate</text>
        <dbReference type="Rhea" id="RHEA:21540"/>
        <dbReference type="ChEBI" id="CHEBI:18277"/>
        <dbReference type="ChEBI" id="CHEBI:58613"/>
        <dbReference type="EC" id="5.3.1.24"/>
    </reaction>
</comment>
<comment type="pathway">
    <text>Amino-acid biosynthesis; L-tryptophan biosynthesis; L-tryptophan from chorismate: step 3/5.</text>
</comment>
<comment type="similarity">
    <text evidence="1">Belongs to the TrpF family.</text>
</comment>
<proteinExistence type="inferred from homology"/>